<feature type="chain" id="PRO_1000064323" description="Protein PsiE homolog">
    <location>
        <begin position="1"/>
        <end position="135"/>
    </location>
</feature>
<feature type="transmembrane region" description="Helical" evidence="1">
    <location>
        <begin position="20"/>
        <end position="40"/>
    </location>
</feature>
<feature type="transmembrane region" description="Helical" evidence="1">
    <location>
        <begin position="54"/>
        <end position="74"/>
    </location>
</feature>
<feature type="transmembrane region" description="Helical" evidence="1">
    <location>
        <begin position="82"/>
        <end position="102"/>
    </location>
</feature>
<feature type="transmembrane region" description="Helical" evidence="1">
    <location>
        <begin position="107"/>
        <end position="127"/>
    </location>
</feature>
<keyword id="KW-0997">Cell inner membrane</keyword>
<keyword id="KW-1003">Cell membrane</keyword>
<keyword id="KW-0472">Membrane</keyword>
<keyword id="KW-0812">Transmembrane</keyword>
<keyword id="KW-1133">Transmembrane helix</keyword>
<name>PSIE_YERP3</name>
<evidence type="ECO:0000255" key="1">
    <source>
        <dbReference type="HAMAP-Rule" id="MF_01048"/>
    </source>
</evidence>
<sequence>MAKNSRSQWIAKNLQRLLNVGLIMLAAILVVFLVKETIHLGKVLFLSNQETSSYMLIEGIVIYFLYFEFIALIVKYFESGYHFPLRYFIYIGITAIIRLIIVDHENPIDTLIYSGSILVLVVTLYLANTERLKRE</sequence>
<accession>A7FDG9</accession>
<proteinExistence type="inferred from homology"/>
<protein>
    <recommendedName>
        <fullName evidence="1">Protein PsiE homolog</fullName>
    </recommendedName>
</protein>
<reference key="1">
    <citation type="journal article" date="2007" name="PLoS Genet.">
        <title>The complete genome sequence of Yersinia pseudotuberculosis IP31758, the causative agent of Far East scarlet-like fever.</title>
        <authorList>
            <person name="Eppinger M."/>
            <person name="Rosovitz M.J."/>
            <person name="Fricke W.F."/>
            <person name="Rasko D.A."/>
            <person name="Kokorina G."/>
            <person name="Fayolle C."/>
            <person name="Lindler L.E."/>
            <person name="Carniel E."/>
            <person name="Ravel J."/>
        </authorList>
    </citation>
    <scope>NUCLEOTIDE SEQUENCE [LARGE SCALE GENOMIC DNA]</scope>
    <source>
        <strain>IP 31758</strain>
    </source>
</reference>
<comment type="subcellular location">
    <subcellularLocation>
        <location evidence="1">Cell inner membrane</location>
        <topology evidence="1">Multi-pass membrane protein</topology>
    </subcellularLocation>
</comment>
<comment type="similarity">
    <text evidence="1">Belongs to the PsiE family.</text>
</comment>
<dbReference type="EMBL" id="CP000720">
    <property type="protein sequence ID" value="ABS46642.1"/>
    <property type="molecule type" value="Genomic_DNA"/>
</dbReference>
<dbReference type="RefSeq" id="WP_002212086.1">
    <property type="nucleotide sequence ID" value="NC_009708.1"/>
</dbReference>
<dbReference type="SMR" id="A7FDG9"/>
<dbReference type="GeneID" id="96663139"/>
<dbReference type="KEGG" id="ypi:YpsIP31758_0303"/>
<dbReference type="HOGENOM" id="CLU_127561_0_0_6"/>
<dbReference type="Proteomes" id="UP000002412">
    <property type="component" value="Chromosome"/>
</dbReference>
<dbReference type="GO" id="GO:0005886">
    <property type="term" value="C:plasma membrane"/>
    <property type="evidence" value="ECO:0007669"/>
    <property type="project" value="UniProtKB-SubCell"/>
</dbReference>
<dbReference type="GO" id="GO:0016036">
    <property type="term" value="P:cellular response to phosphate starvation"/>
    <property type="evidence" value="ECO:0007669"/>
    <property type="project" value="InterPro"/>
</dbReference>
<dbReference type="HAMAP" id="MF_01048">
    <property type="entry name" value="PsiE"/>
    <property type="match status" value="1"/>
</dbReference>
<dbReference type="InterPro" id="IPR009315">
    <property type="entry name" value="P_starv_induced_PsiE"/>
</dbReference>
<dbReference type="InterPro" id="IPR020948">
    <property type="entry name" value="P_starv_induced_PsiE-like"/>
</dbReference>
<dbReference type="NCBIfam" id="NF002764">
    <property type="entry name" value="PRK02833.1-2"/>
    <property type="match status" value="1"/>
</dbReference>
<dbReference type="NCBIfam" id="NF002765">
    <property type="entry name" value="PRK02833.1-3"/>
    <property type="match status" value="1"/>
</dbReference>
<dbReference type="PANTHER" id="PTHR37819">
    <property type="entry name" value="PROTEIN PSIE"/>
    <property type="match status" value="1"/>
</dbReference>
<dbReference type="PANTHER" id="PTHR37819:SF1">
    <property type="entry name" value="PROTEIN PSIE"/>
    <property type="match status" value="1"/>
</dbReference>
<dbReference type="Pfam" id="PF06146">
    <property type="entry name" value="PsiE"/>
    <property type="match status" value="1"/>
</dbReference>
<dbReference type="PIRSF" id="PIRSF029598">
    <property type="entry name" value="PsiE"/>
    <property type="match status" value="1"/>
</dbReference>
<organism>
    <name type="scientific">Yersinia pseudotuberculosis serotype O:1b (strain IP 31758)</name>
    <dbReference type="NCBI Taxonomy" id="349747"/>
    <lineage>
        <taxon>Bacteria</taxon>
        <taxon>Pseudomonadati</taxon>
        <taxon>Pseudomonadota</taxon>
        <taxon>Gammaproteobacteria</taxon>
        <taxon>Enterobacterales</taxon>
        <taxon>Yersiniaceae</taxon>
        <taxon>Yersinia</taxon>
    </lineage>
</organism>
<gene>
    <name evidence="1" type="primary">psiE</name>
    <name type="ordered locus">YpsIP31758_0303</name>
</gene>